<dbReference type="EC" id="6.1.1.19" evidence="1"/>
<dbReference type="EMBL" id="CP000887">
    <property type="protein sequence ID" value="ACD72357.1"/>
    <property type="molecule type" value="Genomic_DNA"/>
</dbReference>
<dbReference type="RefSeq" id="WP_002964007.1">
    <property type="nucleotide sequence ID" value="NC_010742.1"/>
</dbReference>
<dbReference type="SMR" id="B2S5B0"/>
<dbReference type="GeneID" id="93016745"/>
<dbReference type="KEGG" id="bmc:BAbS19_I08360"/>
<dbReference type="HOGENOM" id="CLU_006406_0_1_5"/>
<dbReference type="Proteomes" id="UP000002565">
    <property type="component" value="Chromosome 1"/>
</dbReference>
<dbReference type="GO" id="GO:0005737">
    <property type="term" value="C:cytoplasm"/>
    <property type="evidence" value="ECO:0007669"/>
    <property type="project" value="UniProtKB-SubCell"/>
</dbReference>
<dbReference type="GO" id="GO:0004814">
    <property type="term" value="F:arginine-tRNA ligase activity"/>
    <property type="evidence" value="ECO:0007669"/>
    <property type="project" value="UniProtKB-UniRule"/>
</dbReference>
<dbReference type="GO" id="GO:0005524">
    <property type="term" value="F:ATP binding"/>
    <property type="evidence" value="ECO:0007669"/>
    <property type="project" value="UniProtKB-UniRule"/>
</dbReference>
<dbReference type="GO" id="GO:0006420">
    <property type="term" value="P:arginyl-tRNA aminoacylation"/>
    <property type="evidence" value="ECO:0007669"/>
    <property type="project" value="UniProtKB-UniRule"/>
</dbReference>
<dbReference type="CDD" id="cd00671">
    <property type="entry name" value="ArgRS_core"/>
    <property type="match status" value="1"/>
</dbReference>
<dbReference type="Gene3D" id="3.30.1360.70">
    <property type="entry name" value="Arginyl tRNA synthetase N-terminal domain"/>
    <property type="match status" value="1"/>
</dbReference>
<dbReference type="Gene3D" id="3.40.50.620">
    <property type="entry name" value="HUPs"/>
    <property type="match status" value="1"/>
</dbReference>
<dbReference type="Gene3D" id="1.10.730.10">
    <property type="entry name" value="Isoleucyl-tRNA Synthetase, Domain 1"/>
    <property type="match status" value="1"/>
</dbReference>
<dbReference type="HAMAP" id="MF_00123">
    <property type="entry name" value="Arg_tRNA_synth"/>
    <property type="match status" value="1"/>
</dbReference>
<dbReference type="InterPro" id="IPR001412">
    <property type="entry name" value="aa-tRNA-synth_I_CS"/>
</dbReference>
<dbReference type="InterPro" id="IPR001278">
    <property type="entry name" value="Arg-tRNA-ligase"/>
</dbReference>
<dbReference type="InterPro" id="IPR005148">
    <property type="entry name" value="Arg-tRNA-synth_N"/>
</dbReference>
<dbReference type="InterPro" id="IPR036695">
    <property type="entry name" value="Arg-tRNA-synth_N_sf"/>
</dbReference>
<dbReference type="InterPro" id="IPR035684">
    <property type="entry name" value="ArgRS_core"/>
</dbReference>
<dbReference type="InterPro" id="IPR008909">
    <property type="entry name" value="DALR_anticod-bd"/>
</dbReference>
<dbReference type="InterPro" id="IPR014729">
    <property type="entry name" value="Rossmann-like_a/b/a_fold"/>
</dbReference>
<dbReference type="InterPro" id="IPR009080">
    <property type="entry name" value="tRNAsynth_Ia_anticodon-bd"/>
</dbReference>
<dbReference type="NCBIfam" id="TIGR00456">
    <property type="entry name" value="argS"/>
    <property type="match status" value="1"/>
</dbReference>
<dbReference type="PANTHER" id="PTHR11956:SF5">
    <property type="entry name" value="ARGININE--TRNA LIGASE, CYTOPLASMIC"/>
    <property type="match status" value="1"/>
</dbReference>
<dbReference type="PANTHER" id="PTHR11956">
    <property type="entry name" value="ARGINYL-TRNA SYNTHETASE"/>
    <property type="match status" value="1"/>
</dbReference>
<dbReference type="Pfam" id="PF03485">
    <property type="entry name" value="Arg_tRNA_synt_N"/>
    <property type="match status" value="1"/>
</dbReference>
<dbReference type="Pfam" id="PF05746">
    <property type="entry name" value="DALR_1"/>
    <property type="match status" value="1"/>
</dbReference>
<dbReference type="Pfam" id="PF00750">
    <property type="entry name" value="tRNA-synt_1d"/>
    <property type="match status" value="1"/>
</dbReference>
<dbReference type="PRINTS" id="PR01038">
    <property type="entry name" value="TRNASYNTHARG"/>
</dbReference>
<dbReference type="SMART" id="SM01016">
    <property type="entry name" value="Arg_tRNA_synt_N"/>
    <property type="match status" value="1"/>
</dbReference>
<dbReference type="SMART" id="SM00836">
    <property type="entry name" value="DALR_1"/>
    <property type="match status" value="1"/>
</dbReference>
<dbReference type="SUPFAM" id="SSF47323">
    <property type="entry name" value="Anticodon-binding domain of a subclass of class I aminoacyl-tRNA synthetases"/>
    <property type="match status" value="1"/>
</dbReference>
<dbReference type="SUPFAM" id="SSF55190">
    <property type="entry name" value="Arginyl-tRNA synthetase (ArgRS), N-terminal 'additional' domain"/>
    <property type="match status" value="1"/>
</dbReference>
<dbReference type="SUPFAM" id="SSF52374">
    <property type="entry name" value="Nucleotidylyl transferase"/>
    <property type="match status" value="1"/>
</dbReference>
<dbReference type="PROSITE" id="PS00178">
    <property type="entry name" value="AA_TRNA_LIGASE_I"/>
    <property type="match status" value="1"/>
</dbReference>
<organism>
    <name type="scientific">Brucella abortus (strain S19)</name>
    <dbReference type="NCBI Taxonomy" id="430066"/>
    <lineage>
        <taxon>Bacteria</taxon>
        <taxon>Pseudomonadati</taxon>
        <taxon>Pseudomonadota</taxon>
        <taxon>Alphaproteobacteria</taxon>
        <taxon>Hyphomicrobiales</taxon>
        <taxon>Brucellaceae</taxon>
        <taxon>Brucella/Ochrobactrum group</taxon>
        <taxon>Brucella</taxon>
    </lineage>
</organism>
<evidence type="ECO:0000255" key="1">
    <source>
        <dbReference type="HAMAP-Rule" id="MF_00123"/>
    </source>
</evidence>
<protein>
    <recommendedName>
        <fullName evidence="1">Arginine--tRNA ligase</fullName>
        <ecNumber evidence="1">6.1.1.19</ecNumber>
    </recommendedName>
    <alternativeName>
        <fullName evidence="1">Arginyl-tRNA synthetase</fullName>
        <shortName evidence="1">ArgRS</shortName>
    </alternativeName>
</protein>
<reference key="1">
    <citation type="journal article" date="2008" name="PLoS ONE">
        <title>Genome sequence of Brucella abortus vaccine strain S19 compared to virulent strains yields candidate virulence genes.</title>
        <authorList>
            <person name="Crasta O.R."/>
            <person name="Folkerts O."/>
            <person name="Fei Z."/>
            <person name="Mane S.P."/>
            <person name="Evans C."/>
            <person name="Martino-Catt S."/>
            <person name="Bricker B."/>
            <person name="Yu G."/>
            <person name="Du L."/>
            <person name="Sobral B.W."/>
        </authorList>
    </citation>
    <scope>NUCLEOTIDE SEQUENCE [LARGE SCALE GENOMIC DNA]</scope>
    <source>
        <strain>S19</strain>
    </source>
</reference>
<comment type="catalytic activity">
    <reaction evidence="1">
        <text>tRNA(Arg) + L-arginine + ATP = L-arginyl-tRNA(Arg) + AMP + diphosphate</text>
        <dbReference type="Rhea" id="RHEA:20301"/>
        <dbReference type="Rhea" id="RHEA-COMP:9658"/>
        <dbReference type="Rhea" id="RHEA-COMP:9673"/>
        <dbReference type="ChEBI" id="CHEBI:30616"/>
        <dbReference type="ChEBI" id="CHEBI:32682"/>
        <dbReference type="ChEBI" id="CHEBI:33019"/>
        <dbReference type="ChEBI" id="CHEBI:78442"/>
        <dbReference type="ChEBI" id="CHEBI:78513"/>
        <dbReference type="ChEBI" id="CHEBI:456215"/>
        <dbReference type="EC" id="6.1.1.19"/>
    </reaction>
</comment>
<comment type="subunit">
    <text evidence="1">Monomer.</text>
</comment>
<comment type="subcellular location">
    <subcellularLocation>
        <location evidence="1">Cytoplasm</location>
    </subcellularLocation>
</comment>
<comment type="similarity">
    <text evidence="1">Belongs to the class-I aminoacyl-tRNA synthetase family.</text>
</comment>
<keyword id="KW-0030">Aminoacyl-tRNA synthetase</keyword>
<keyword id="KW-0067">ATP-binding</keyword>
<keyword id="KW-0963">Cytoplasm</keyword>
<keyword id="KW-0436">Ligase</keyword>
<keyword id="KW-0547">Nucleotide-binding</keyword>
<keyword id="KW-0648">Protein biosynthesis</keyword>
<proteinExistence type="inferred from homology"/>
<accession>B2S5B0</accession>
<feature type="chain" id="PRO_1000095339" description="Arginine--tRNA ligase">
    <location>
        <begin position="1"/>
        <end position="585"/>
    </location>
</feature>
<feature type="short sequence motif" description="'HIGH' region">
    <location>
        <begin position="131"/>
        <end position="141"/>
    </location>
</feature>
<gene>
    <name evidence="1" type="primary">argS</name>
    <name type="ordered locus">BAbS19_I08360</name>
</gene>
<name>SYR_BRUA1</name>
<sequence>MNIFADFDARIKKTFQDIDLKPKDGGELDLSRIGVEPPRDASHGDIATNAAMVLSKAVGQNPRELAARIAEALKADEDVESVDVAGPGFINLRLKASYWQRELLVMLNEGTDFGRSRLGAGKKVNVEYVSANPTGPMHVGHCRGAVVGDVLANLLKFAGYDVVKEYYINDAGAQIDVLARSVMLRYREALGESIGEIPAGLYPGDYLVRVGQELAGEFGTKLLEMPEAEALAIVKDRTIDAMMAMIRADLDALNVHHDVFYSERKLHVDHARAIRNAINDLTLKGHVYKGKLPPPKGRLPEDWEDREQTLFRSTEVGDDIDRPLMKSDGSFTYFAGDVTYFKDKYDRGFNEMIYVLGADHGGYVKRLEAVARAVSDGKAKLTVLLCQLVKLFRNGEPVRMSKRAGEFITLRDVVDEVGRDPVRFMMLYRKNDAPLDFDFAKVTEQSKDNPVFYVQYASARCHSVFRQAADQLGLVDLDRVAMGSHFEKLTDESEIALVRKLAEYPRLIESAAIHQEPHRLAFYLYDLASSFHSQWNRGAENPDLRFIKVNDPDLSLARLGLVQVVSDVLTSGLTIIGADAPTEMR</sequence>